<sequence length="494" mass="56009">MTDRPTITTTAGAPVPDNQNSLTAGPRGGIMLQDYQLIEKLAHQNRERIPERVVHAKGWGAFGSLKITGDISQYTRAKCLQPGAETPMLARFSTVAGEQGAADHERDVRGFALKFYTDEGNWDLVGNNTPVFFIRDPYKFPDFIHTQKRHPKTNLRSATAMWDYWSLSPESLHQVTILMSDRGLPQTPMHMNGYGSHTYSFWNDAGERYWVKFHFKTQQGHKFFTNEEGEAVIGKTREGYQESLFYAIENGEFPRWTVQVQIMPELDVEKTPYNPFDLTKVWPHADYPPVEIGVLELNRNPENYFAEIENAAFSPSNIVPGIGFSPDKVLQARIFSYADAHRYRLGTHYEHIPVNQPRCPVHHYHRDGQMNTYGGIRTGNPDAYYEPNSFNGPAEQPLAKEPPLRIDGDMSRYDHRVGNDDYVQVRALFGLFDEGQKSRLFSNIAAAMGGVPGEIIERQLIHFARVHPEYEAGVRQALKTAHGYEADTISTAAE</sequence>
<evidence type="ECO:0000250" key="1"/>
<evidence type="ECO:0000256" key="2">
    <source>
        <dbReference type="SAM" id="MobiDB-lite"/>
    </source>
</evidence>
<evidence type="ECO:0000305" key="3"/>
<name>CATA_RHIME</name>
<comment type="function">
    <text>Decomposes hydrogen peroxide into water and oxygen; serves to protect cells from the toxic effects of hydrogen peroxide.</text>
</comment>
<comment type="catalytic activity">
    <reaction>
        <text>2 H2O2 = O2 + 2 H2O</text>
        <dbReference type="Rhea" id="RHEA:20309"/>
        <dbReference type="ChEBI" id="CHEBI:15377"/>
        <dbReference type="ChEBI" id="CHEBI:15379"/>
        <dbReference type="ChEBI" id="CHEBI:16240"/>
        <dbReference type="EC" id="1.11.1.6"/>
    </reaction>
</comment>
<comment type="cofactor">
    <cofactor>
        <name>heme</name>
        <dbReference type="ChEBI" id="CHEBI:30413"/>
    </cofactor>
</comment>
<comment type="subcellular location">
    <subcellularLocation>
        <location>Periplasm</location>
    </subcellularLocation>
</comment>
<comment type="similarity">
    <text evidence="3">Belongs to the catalase family.</text>
</comment>
<gene>
    <name type="primary">katA</name>
    <name type="ordered locus">R00764</name>
    <name type="ORF">SMc00819</name>
</gene>
<feature type="chain" id="PRO_0000084996" description="Catalase A">
    <location>
        <begin position="1"/>
        <end position="494"/>
    </location>
</feature>
<feature type="region of interest" description="Disordered" evidence="2">
    <location>
        <begin position="1"/>
        <end position="25"/>
    </location>
</feature>
<feature type="compositionally biased region" description="Polar residues" evidence="2">
    <location>
        <begin position="1"/>
        <end position="23"/>
    </location>
</feature>
<feature type="active site" evidence="1">
    <location>
        <position position="55"/>
    </location>
</feature>
<feature type="active site" evidence="1">
    <location>
        <position position="127"/>
    </location>
</feature>
<feature type="binding site" description="axial binding residue" evidence="1">
    <location>
        <position position="337"/>
    </location>
    <ligand>
        <name>heme</name>
        <dbReference type="ChEBI" id="CHEBI:30413"/>
    </ligand>
    <ligandPart>
        <name>Fe</name>
        <dbReference type="ChEBI" id="CHEBI:18248"/>
    </ligandPart>
</feature>
<feature type="sequence conflict" description="In Ref. 1." evidence="3" ref="1">
    <original>MTDRPTITTTAGAPVPDNQ</original>
    <variation>MPPPLPERRHLICACVGTYCGCGSNPPSGSSPFVPASFFVPAEGTAEPRCGGVSSPRSRAGFSPRIRALISSPVSVSYSSKPSARAT</variation>
    <location>
        <begin position="1"/>
        <end position="19"/>
    </location>
</feature>
<keyword id="KW-0349">Heme</keyword>
<keyword id="KW-0376">Hydrogen peroxide</keyword>
<keyword id="KW-0408">Iron</keyword>
<keyword id="KW-0479">Metal-binding</keyword>
<keyword id="KW-0560">Oxidoreductase</keyword>
<keyword id="KW-0574">Periplasm</keyword>
<keyword id="KW-0575">Peroxidase</keyword>
<keyword id="KW-1185">Reference proteome</keyword>
<organism>
    <name type="scientific">Rhizobium meliloti (strain 1021)</name>
    <name type="common">Ensifer meliloti</name>
    <name type="synonym">Sinorhizobium meliloti</name>
    <dbReference type="NCBI Taxonomy" id="266834"/>
    <lineage>
        <taxon>Bacteria</taxon>
        <taxon>Pseudomonadati</taxon>
        <taxon>Pseudomonadota</taxon>
        <taxon>Alphaproteobacteria</taxon>
        <taxon>Hyphomicrobiales</taxon>
        <taxon>Rhizobiaceae</taxon>
        <taxon>Sinorhizobium/Ensifer group</taxon>
        <taxon>Sinorhizobium</taxon>
    </lineage>
</organism>
<reference key="1">
    <citation type="journal article" date="1996" name="J. Bacteriol.">
        <title>Cloning and characterization of the katA gene of Rhizobium meliloti encoding a hydrogen peroxide-inducible catalase.</title>
        <authorList>
            <person name="Herouart D."/>
            <person name="Sigaud S."/>
            <person name="Moreau S."/>
            <person name="Frendo P."/>
            <person name="Touati D."/>
            <person name="Puppo A."/>
        </authorList>
    </citation>
    <scope>NUCLEOTIDE SEQUENCE [GENOMIC DNA]</scope>
    <source>
        <strain>RCR2011 / SU47</strain>
    </source>
</reference>
<reference key="2">
    <citation type="journal article" date="2001" name="Proc. Natl. Acad. Sci. U.S.A.">
        <title>Analysis of the chromosome sequence of the legume symbiont Sinorhizobium meliloti strain 1021.</title>
        <authorList>
            <person name="Capela D."/>
            <person name="Barloy-Hubler F."/>
            <person name="Gouzy J."/>
            <person name="Bothe G."/>
            <person name="Ampe F."/>
            <person name="Batut J."/>
            <person name="Boistard P."/>
            <person name="Becker A."/>
            <person name="Boutry M."/>
            <person name="Cadieu E."/>
            <person name="Dreano S."/>
            <person name="Gloux S."/>
            <person name="Godrie T."/>
            <person name="Goffeau A."/>
            <person name="Kahn D."/>
            <person name="Kiss E."/>
            <person name="Lelaure V."/>
            <person name="Masuy D."/>
            <person name="Pohl T."/>
            <person name="Portetelle D."/>
            <person name="Puehler A."/>
            <person name="Purnelle B."/>
            <person name="Ramsperger U."/>
            <person name="Renard C."/>
            <person name="Thebault P."/>
            <person name="Vandenbol M."/>
            <person name="Weidner S."/>
            <person name="Galibert F."/>
        </authorList>
    </citation>
    <scope>NUCLEOTIDE SEQUENCE [LARGE SCALE GENOMIC DNA]</scope>
    <source>
        <strain>1021</strain>
    </source>
</reference>
<reference key="3">
    <citation type="journal article" date="2001" name="Science">
        <title>The composite genome of the legume symbiont Sinorhizobium meliloti.</title>
        <authorList>
            <person name="Galibert F."/>
            <person name="Finan T.M."/>
            <person name="Long S.R."/>
            <person name="Puehler A."/>
            <person name="Abola P."/>
            <person name="Ampe F."/>
            <person name="Barloy-Hubler F."/>
            <person name="Barnett M.J."/>
            <person name="Becker A."/>
            <person name="Boistard P."/>
            <person name="Bothe G."/>
            <person name="Boutry M."/>
            <person name="Bowser L."/>
            <person name="Buhrmester J."/>
            <person name="Cadieu E."/>
            <person name="Capela D."/>
            <person name="Chain P."/>
            <person name="Cowie A."/>
            <person name="Davis R.W."/>
            <person name="Dreano S."/>
            <person name="Federspiel N.A."/>
            <person name="Fisher R.F."/>
            <person name="Gloux S."/>
            <person name="Godrie T."/>
            <person name="Goffeau A."/>
            <person name="Golding B."/>
            <person name="Gouzy J."/>
            <person name="Gurjal M."/>
            <person name="Hernandez-Lucas I."/>
            <person name="Hong A."/>
            <person name="Huizar L."/>
            <person name="Hyman R.W."/>
            <person name="Jones T."/>
            <person name="Kahn D."/>
            <person name="Kahn M.L."/>
            <person name="Kalman S."/>
            <person name="Keating D.H."/>
            <person name="Kiss E."/>
            <person name="Komp C."/>
            <person name="Lelaure V."/>
            <person name="Masuy D."/>
            <person name="Palm C."/>
            <person name="Peck M.C."/>
            <person name="Pohl T.M."/>
            <person name="Portetelle D."/>
            <person name="Purnelle B."/>
            <person name="Ramsperger U."/>
            <person name="Surzycki R."/>
            <person name="Thebault P."/>
            <person name="Vandenbol M."/>
            <person name="Vorhoelter F.J."/>
            <person name="Weidner S."/>
            <person name="Wells D.H."/>
            <person name="Wong K."/>
            <person name="Yeh K.-C."/>
            <person name="Batut J."/>
        </authorList>
    </citation>
    <scope>NUCLEOTIDE SEQUENCE [LARGE SCALE GENOMIC DNA]</scope>
    <source>
        <strain>1021</strain>
    </source>
</reference>
<proteinExistence type="inferred from homology"/>
<dbReference type="EC" id="1.11.1.6"/>
<dbReference type="EMBL" id="U59271">
    <property type="protein sequence ID" value="AAC44649.1"/>
    <property type="molecule type" value="Genomic_DNA"/>
</dbReference>
<dbReference type="EMBL" id="AL591688">
    <property type="protein sequence ID" value="CAC45336.1"/>
    <property type="molecule type" value="Genomic_DNA"/>
</dbReference>
<dbReference type="RefSeq" id="NP_384870.1">
    <property type="nucleotide sequence ID" value="NC_003047.1"/>
</dbReference>
<dbReference type="RefSeq" id="WP_010968798.1">
    <property type="nucleotide sequence ID" value="NC_003047.1"/>
</dbReference>
<dbReference type="SMR" id="P95631"/>
<dbReference type="PeroxiBase" id="4297">
    <property type="entry name" value="SmeKat01"/>
</dbReference>
<dbReference type="EnsemblBacteria" id="CAC45336">
    <property type="protein sequence ID" value="CAC45336"/>
    <property type="gene ID" value="SMc00819"/>
</dbReference>
<dbReference type="KEGG" id="sme:SMc00819"/>
<dbReference type="PATRIC" id="fig|266834.11.peg.2148"/>
<dbReference type="eggNOG" id="COG0753">
    <property type="taxonomic scope" value="Bacteria"/>
</dbReference>
<dbReference type="HOGENOM" id="CLU_010645_2_0_5"/>
<dbReference type="OrthoDB" id="9761719at2"/>
<dbReference type="Proteomes" id="UP000001976">
    <property type="component" value="Chromosome"/>
</dbReference>
<dbReference type="GO" id="GO:0005737">
    <property type="term" value="C:cytoplasm"/>
    <property type="evidence" value="ECO:0007669"/>
    <property type="project" value="TreeGrafter"/>
</dbReference>
<dbReference type="GO" id="GO:0042597">
    <property type="term" value="C:periplasmic space"/>
    <property type="evidence" value="ECO:0007669"/>
    <property type="project" value="UniProtKB-SubCell"/>
</dbReference>
<dbReference type="GO" id="GO:0004096">
    <property type="term" value="F:catalase activity"/>
    <property type="evidence" value="ECO:0007669"/>
    <property type="project" value="UniProtKB-EC"/>
</dbReference>
<dbReference type="GO" id="GO:0020037">
    <property type="term" value="F:heme binding"/>
    <property type="evidence" value="ECO:0007669"/>
    <property type="project" value="InterPro"/>
</dbReference>
<dbReference type="GO" id="GO:0046872">
    <property type="term" value="F:metal ion binding"/>
    <property type="evidence" value="ECO:0007669"/>
    <property type="project" value="UniProtKB-KW"/>
</dbReference>
<dbReference type="GO" id="GO:0042744">
    <property type="term" value="P:hydrogen peroxide catabolic process"/>
    <property type="evidence" value="ECO:0007669"/>
    <property type="project" value="UniProtKB-KW"/>
</dbReference>
<dbReference type="GO" id="GO:0042542">
    <property type="term" value="P:response to hydrogen peroxide"/>
    <property type="evidence" value="ECO:0007669"/>
    <property type="project" value="TreeGrafter"/>
</dbReference>
<dbReference type="CDD" id="cd08156">
    <property type="entry name" value="catalase_clade_3"/>
    <property type="match status" value="1"/>
</dbReference>
<dbReference type="FunFam" id="2.40.180.10:FF:000001">
    <property type="entry name" value="Catalase"/>
    <property type="match status" value="1"/>
</dbReference>
<dbReference type="Gene3D" id="2.40.180.10">
    <property type="entry name" value="Catalase core domain"/>
    <property type="match status" value="1"/>
</dbReference>
<dbReference type="InterPro" id="IPR018028">
    <property type="entry name" value="Catalase"/>
</dbReference>
<dbReference type="InterPro" id="IPR040333">
    <property type="entry name" value="Catalase_3"/>
</dbReference>
<dbReference type="InterPro" id="IPR024711">
    <property type="entry name" value="Catalase_clade1/3"/>
</dbReference>
<dbReference type="InterPro" id="IPR011614">
    <property type="entry name" value="Catalase_core"/>
</dbReference>
<dbReference type="InterPro" id="IPR002226">
    <property type="entry name" value="Catalase_haem_BS"/>
</dbReference>
<dbReference type="InterPro" id="IPR010582">
    <property type="entry name" value="Catalase_immune_responsive"/>
</dbReference>
<dbReference type="InterPro" id="IPR020835">
    <property type="entry name" value="Catalase_sf"/>
</dbReference>
<dbReference type="PANTHER" id="PTHR11465">
    <property type="entry name" value="CATALASE"/>
    <property type="match status" value="1"/>
</dbReference>
<dbReference type="PANTHER" id="PTHR11465:SF61">
    <property type="entry name" value="CATALASE"/>
    <property type="match status" value="1"/>
</dbReference>
<dbReference type="Pfam" id="PF00199">
    <property type="entry name" value="Catalase"/>
    <property type="match status" value="1"/>
</dbReference>
<dbReference type="Pfam" id="PF06628">
    <property type="entry name" value="Catalase-rel"/>
    <property type="match status" value="1"/>
</dbReference>
<dbReference type="PIRSF" id="PIRSF038928">
    <property type="entry name" value="Catalase_clade1-3"/>
    <property type="match status" value="1"/>
</dbReference>
<dbReference type="PRINTS" id="PR00067">
    <property type="entry name" value="CATALASE"/>
</dbReference>
<dbReference type="SMART" id="SM01060">
    <property type="entry name" value="Catalase"/>
    <property type="match status" value="1"/>
</dbReference>
<dbReference type="SUPFAM" id="SSF56634">
    <property type="entry name" value="Heme-dependent catalase-like"/>
    <property type="match status" value="1"/>
</dbReference>
<dbReference type="PROSITE" id="PS00437">
    <property type="entry name" value="CATALASE_1"/>
    <property type="match status" value="1"/>
</dbReference>
<dbReference type="PROSITE" id="PS51402">
    <property type="entry name" value="CATALASE_3"/>
    <property type="match status" value="1"/>
</dbReference>
<accession>P95631</accession>
<protein>
    <recommendedName>
        <fullName>Catalase A</fullName>
        <ecNumber>1.11.1.6</ecNumber>
    </recommendedName>
</protein>